<gene>
    <name type="ordered locus">TC_0003</name>
</gene>
<reference key="1">
    <citation type="journal article" date="2000" name="Nucleic Acids Res.">
        <title>Genome sequences of Chlamydia trachomatis MoPn and Chlamydia pneumoniae AR39.</title>
        <authorList>
            <person name="Read T.D."/>
            <person name="Brunham R.C."/>
            <person name="Shen C."/>
            <person name="Gill S.R."/>
            <person name="Heidelberg J.F."/>
            <person name="White O."/>
            <person name="Hickey E.K."/>
            <person name="Peterson J.D."/>
            <person name="Utterback T.R."/>
            <person name="Berry K.J."/>
            <person name="Bass S."/>
            <person name="Linher K.D."/>
            <person name="Weidman J.F."/>
            <person name="Khouri H.M."/>
            <person name="Craven B."/>
            <person name="Bowman C."/>
            <person name="Dodson R.J."/>
            <person name="Gwinn M.L."/>
            <person name="Nelson W.C."/>
            <person name="DeBoy R.T."/>
            <person name="Kolonay J.F."/>
            <person name="McClarty G."/>
            <person name="Salzberg S.L."/>
            <person name="Eisen J.A."/>
            <person name="Fraser C.M."/>
        </authorList>
    </citation>
    <scope>NUCLEOTIDE SEQUENCE [LARGE SCALE GENOMIC DNA]</scope>
    <source>
        <strain>MoPn / Nigg</strain>
    </source>
</reference>
<sequence length="143" mass="16528">MKNNSAQKIIDSIKQILSIYKIDFDPSFGAVLTDDNDLDYQMLIEKTQEKIQELDKRSQEILQQTGMTREQMEVFANNPDNFSPEEWRALETIRSSCNEYKKETEELIKEVTQDISHTSGKSPTPKAKSSSPKKSKKKNWIPL</sequence>
<comment type="similarity">
    <text evidence="2">Belongs to the chlamydial CPn_0742/CT_635/TC_0003 family.</text>
</comment>
<organism>
    <name type="scientific">Chlamydia muridarum (strain MoPn / Nigg)</name>
    <dbReference type="NCBI Taxonomy" id="243161"/>
    <lineage>
        <taxon>Bacteria</taxon>
        <taxon>Pseudomonadati</taxon>
        <taxon>Chlamydiota</taxon>
        <taxon>Chlamydiia</taxon>
        <taxon>Chlamydiales</taxon>
        <taxon>Chlamydiaceae</taxon>
        <taxon>Chlamydia/Chlamydophila group</taxon>
        <taxon>Chlamydia</taxon>
    </lineage>
</organism>
<name>Y003_CHLMU</name>
<feature type="chain" id="PRO_0000218424" description="Uncharacterized protein TC_0003">
    <location>
        <begin position="1"/>
        <end position="143"/>
    </location>
</feature>
<feature type="region of interest" description="Disordered" evidence="1">
    <location>
        <begin position="111"/>
        <end position="143"/>
    </location>
</feature>
<feature type="compositionally biased region" description="Low complexity" evidence="1">
    <location>
        <begin position="119"/>
        <end position="130"/>
    </location>
</feature>
<feature type="compositionally biased region" description="Basic residues" evidence="1">
    <location>
        <begin position="131"/>
        <end position="143"/>
    </location>
</feature>
<protein>
    <recommendedName>
        <fullName>Uncharacterized protein TC_0003</fullName>
    </recommendedName>
</protein>
<accession>Q9PLU2</accession>
<dbReference type="EMBL" id="AE002160">
    <property type="protein sequence ID" value="AAF38897.1"/>
    <property type="molecule type" value="Genomic_DNA"/>
</dbReference>
<dbReference type="PIR" id="D81751">
    <property type="entry name" value="D81751"/>
</dbReference>
<dbReference type="RefSeq" id="WP_010229075.1">
    <property type="nucleotide sequence ID" value="NZ_CP063055.1"/>
</dbReference>
<dbReference type="SMR" id="Q9PLU2"/>
<dbReference type="GeneID" id="1245526"/>
<dbReference type="KEGG" id="cmu:TC_0003"/>
<dbReference type="HOGENOM" id="CLU_1793032_0_0_0"/>
<dbReference type="OrthoDB" id="18081at2"/>
<dbReference type="Proteomes" id="UP000000800">
    <property type="component" value="Chromosome"/>
</dbReference>
<evidence type="ECO:0000256" key="1">
    <source>
        <dbReference type="SAM" id="MobiDB-lite"/>
    </source>
</evidence>
<evidence type="ECO:0000305" key="2"/>
<proteinExistence type="inferred from homology"/>